<feature type="chain" id="PRO_0000061822" description="Cytochrome b6">
    <location>
        <begin position="1"/>
        <end position="215"/>
    </location>
</feature>
<feature type="transmembrane region" description="Helical" evidence="1">
    <location>
        <begin position="32"/>
        <end position="52"/>
    </location>
</feature>
<feature type="transmembrane region" description="Helical" evidence="1">
    <location>
        <begin position="90"/>
        <end position="110"/>
    </location>
</feature>
<feature type="transmembrane region" description="Helical" evidence="1">
    <location>
        <begin position="116"/>
        <end position="136"/>
    </location>
</feature>
<feature type="transmembrane region" description="Helical" evidence="1">
    <location>
        <begin position="186"/>
        <end position="206"/>
    </location>
</feature>
<feature type="binding site" description="covalent" evidence="1">
    <location>
        <position position="35"/>
    </location>
    <ligand>
        <name>heme c</name>
        <dbReference type="ChEBI" id="CHEBI:61717"/>
    </ligand>
</feature>
<feature type="binding site" description="axial binding residue" evidence="1">
    <location>
        <position position="86"/>
    </location>
    <ligand>
        <name>heme b</name>
        <dbReference type="ChEBI" id="CHEBI:60344"/>
        <label>2</label>
    </ligand>
    <ligandPart>
        <name>Fe</name>
        <dbReference type="ChEBI" id="CHEBI:18248"/>
    </ligandPart>
</feature>
<feature type="binding site" description="axial binding residue" evidence="1">
    <location>
        <position position="100"/>
    </location>
    <ligand>
        <name>heme b</name>
        <dbReference type="ChEBI" id="CHEBI:60344"/>
        <label>1</label>
    </ligand>
    <ligandPart>
        <name>Fe</name>
        <dbReference type="ChEBI" id="CHEBI:18248"/>
    </ligandPart>
</feature>
<feature type="binding site" description="axial binding residue" evidence="1">
    <location>
        <position position="187"/>
    </location>
    <ligand>
        <name>heme b</name>
        <dbReference type="ChEBI" id="CHEBI:60344"/>
        <label>2</label>
    </ligand>
    <ligandPart>
        <name>Fe</name>
        <dbReference type="ChEBI" id="CHEBI:18248"/>
    </ligandPart>
</feature>
<feature type="binding site" description="axial binding residue" evidence="1">
    <location>
        <position position="202"/>
    </location>
    <ligand>
        <name>heme b</name>
        <dbReference type="ChEBI" id="CHEBI:60344"/>
        <label>1</label>
    </ligand>
    <ligandPart>
        <name>Fe</name>
        <dbReference type="ChEBI" id="CHEBI:18248"/>
    </ligandPart>
</feature>
<organism>
    <name type="scientific">Nicotiana tabacum</name>
    <name type="common">Common tobacco</name>
    <dbReference type="NCBI Taxonomy" id="4097"/>
    <lineage>
        <taxon>Eukaryota</taxon>
        <taxon>Viridiplantae</taxon>
        <taxon>Streptophyta</taxon>
        <taxon>Embryophyta</taxon>
        <taxon>Tracheophyta</taxon>
        <taxon>Spermatophyta</taxon>
        <taxon>Magnoliopsida</taxon>
        <taxon>eudicotyledons</taxon>
        <taxon>Gunneridae</taxon>
        <taxon>Pentapetalae</taxon>
        <taxon>asterids</taxon>
        <taxon>lamiids</taxon>
        <taxon>Solanales</taxon>
        <taxon>Solanaceae</taxon>
        <taxon>Nicotianoideae</taxon>
        <taxon>Nicotianeae</taxon>
        <taxon>Nicotiana</taxon>
    </lineage>
</organism>
<keyword id="KW-0150">Chloroplast</keyword>
<keyword id="KW-0249">Electron transport</keyword>
<keyword id="KW-0349">Heme</keyword>
<keyword id="KW-0408">Iron</keyword>
<keyword id="KW-0472">Membrane</keyword>
<keyword id="KW-0479">Metal-binding</keyword>
<keyword id="KW-0602">Photosynthesis</keyword>
<keyword id="KW-0934">Plastid</keyword>
<keyword id="KW-1185">Reference proteome</keyword>
<keyword id="KW-0691">RNA editing</keyword>
<keyword id="KW-0793">Thylakoid</keyword>
<keyword id="KW-0812">Transmembrane</keyword>
<keyword id="KW-1133">Transmembrane helix</keyword>
<keyword id="KW-0813">Transport</keyword>
<protein>
    <recommendedName>
        <fullName evidence="1">Cytochrome b6</fullName>
    </recommendedName>
</protein>
<name>CYB6_TOBAC</name>
<evidence type="ECO:0000255" key="1">
    <source>
        <dbReference type="HAMAP-Rule" id="MF_00633"/>
    </source>
</evidence>
<evidence type="ECO:0000269" key="2">
    <source>
    </source>
</evidence>
<gene>
    <name evidence="1" type="primary">petB</name>
</gene>
<accession>P06247</accession>
<geneLocation type="chloroplast"/>
<proteinExistence type="evidence at transcript level"/>
<dbReference type="EMBL" id="Z00044">
    <property type="protein sequence ID" value="CAA77375.1"/>
    <property type="molecule type" value="Genomic_DNA"/>
</dbReference>
<dbReference type="PIR" id="A00162">
    <property type="entry name" value="CBNT6"/>
</dbReference>
<dbReference type="RefSeq" id="NP_054530.1">
    <property type="nucleotide sequence ID" value="NC_001879.2"/>
</dbReference>
<dbReference type="SMR" id="P06247"/>
<dbReference type="GeneID" id="800462"/>
<dbReference type="KEGG" id="nta:800462"/>
<dbReference type="OrthoDB" id="1246142at2759"/>
<dbReference type="Proteomes" id="UP000084051">
    <property type="component" value="Unplaced"/>
</dbReference>
<dbReference type="GO" id="GO:0009535">
    <property type="term" value="C:chloroplast thylakoid membrane"/>
    <property type="evidence" value="ECO:0007669"/>
    <property type="project" value="UniProtKB-SubCell"/>
</dbReference>
<dbReference type="GO" id="GO:0045158">
    <property type="term" value="F:electron transporter, transferring electrons within cytochrome b6/f complex of photosystem II activity"/>
    <property type="evidence" value="ECO:0007669"/>
    <property type="project" value="UniProtKB-UniRule"/>
</dbReference>
<dbReference type="GO" id="GO:0046872">
    <property type="term" value="F:metal ion binding"/>
    <property type="evidence" value="ECO:0007669"/>
    <property type="project" value="UniProtKB-KW"/>
</dbReference>
<dbReference type="GO" id="GO:0016491">
    <property type="term" value="F:oxidoreductase activity"/>
    <property type="evidence" value="ECO:0007669"/>
    <property type="project" value="InterPro"/>
</dbReference>
<dbReference type="GO" id="GO:0015979">
    <property type="term" value="P:photosynthesis"/>
    <property type="evidence" value="ECO:0007669"/>
    <property type="project" value="UniProtKB-UniRule"/>
</dbReference>
<dbReference type="GO" id="GO:0022904">
    <property type="term" value="P:respiratory electron transport chain"/>
    <property type="evidence" value="ECO:0007669"/>
    <property type="project" value="InterPro"/>
</dbReference>
<dbReference type="CDD" id="cd00284">
    <property type="entry name" value="Cytochrome_b_N"/>
    <property type="match status" value="1"/>
</dbReference>
<dbReference type="FunFam" id="1.20.810.10:FF:000001">
    <property type="entry name" value="Cytochrome b6"/>
    <property type="match status" value="1"/>
</dbReference>
<dbReference type="Gene3D" id="1.20.810.10">
    <property type="entry name" value="Cytochrome Bc1 Complex, Chain C"/>
    <property type="match status" value="1"/>
</dbReference>
<dbReference type="HAMAP" id="MF_00633">
    <property type="entry name" value="Cytb6_f_cytb6"/>
    <property type="match status" value="1"/>
</dbReference>
<dbReference type="InterPro" id="IPR005797">
    <property type="entry name" value="Cyt_b/b6_N"/>
</dbReference>
<dbReference type="InterPro" id="IPR023530">
    <property type="entry name" value="Cyt_B6_PetB"/>
</dbReference>
<dbReference type="InterPro" id="IPR027387">
    <property type="entry name" value="Cytb/b6-like_sf"/>
</dbReference>
<dbReference type="InterPro" id="IPR048259">
    <property type="entry name" value="Cytochrome_b_N_euk/bac"/>
</dbReference>
<dbReference type="InterPro" id="IPR016174">
    <property type="entry name" value="Di-haem_cyt_TM"/>
</dbReference>
<dbReference type="NCBIfam" id="NF002990">
    <property type="entry name" value="PRK03735.1"/>
    <property type="match status" value="1"/>
</dbReference>
<dbReference type="PANTHER" id="PTHR19271">
    <property type="entry name" value="CYTOCHROME B"/>
    <property type="match status" value="1"/>
</dbReference>
<dbReference type="PANTHER" id="PTHR19271:SF16">
    <property type="entry name" value="CYTOCHROME B"/>
    <property type="match status" value="1"/>
</dbReference>
<dbReference type="Pfam" id="PF00033">
    <property type="entry name" value="Cytochrome_B"/>
    <property type="match status" value="1"/>
</dbReference>
<dbReference type="PIRSF" id="PIRSF000032">
    <property type="entry name" value="Cytochrome_b6"/>
    <property type="match status" value="1"/>
</dbReference>
<dbReference type="SUPFAM" id="SSF81342">
    <property type="entry name" value="Transmembrane di-heme cytochromes"/>
    <property type="match status" value="1"/>
</dbReference>
<dbReference type="PROSITE" id="PS51002">
    <property type="entry name" value="CYTB_NTER"/>
    <property type="match status" value="1"/>
</dbReference>
<reference key="1">
    <citation type="journal article" date="1986" name="EMBO J.">
        <title>The complete nucleotide sequence of the tobacco chloroplast genome: its gene organization and expression.</title>
        <authorList>
            <person name="Shinozaki K."/>
            <person name="Ohme M."/>
            <person name="Tanaka M."/>
            <person name="Wakasugi T."/>
            <person name="Hayashida N."/>
            <person name="Matsubayashi T."/>
            <person name="Zaita N."/>
            <person name="Chunwongse J."/>
            <person name="Obokata J."/>
            <person name="Yamaguchi-Shinozaki K."/>
            <person name="Ohto C."/>
            <person name="Torazawa K."/>
            <person name="Meng B.-Y."/>
            <person name="Sugita M."/>
            <person name="Deno H."/>
            <person name="Kamogashira T."/>
            <person name="Yamada K."/>
            <person name="Kusuda J."/>
            <person name="Takaiwa F."/>
            <person name="Kato A."/>
            <person name="Tohdoh N."/>
            <person name="Shimada H."/>
            <person name="Sugiura M."/>
        </authorList>
    </citation>
    <scope>NUCLEOTIDE SEQUENCE [LARGE SCALE GENOMIC DNA]</scope>
    <source>
        <strain>cv. Bright Yellow 4</strain>
    </source>
</reference>
<reference key="2">
    <citation type="journal article" date="1994" name="Plant Mol. Biol.">
        <title>RNA editing of tobacco petB mRNAs occurs both in chloroplasts and non-photosynthetic proplastids.</title>
        <authorList>
            <person name="Hirose T."/>
            <person name="Wakasugi T."/>
            <person name="Sugiura M."/>
            <person name="Kossel H."/>
        </authorList>
    </citation>
    <scope>RNA EDITING</scope>
    <source>
        <tissue>Leaf</tissue>
        <tissue>Protoplast</tissue>
    </source>
</reference>
<comment type="function">
    <text evidence="1">Component of the cytochrome b6-f complex, which mediates electron transfer between photosystem II (PSII) and photosystem I (PSI), cyclic electron flow around PSI, and state transitions.</text>
</comment>
<comment type="cofactor">
    <cofactor evidence="1">
        <name>heme b</name>
        <dbReference type="ChEBI" id="CHEBI:60344"/>
    </cofactor>
    <text evidence="1">Binds 2 heme b groups non-covalently with two histidine residues as axial ligands.</text>
</comment>
<comment type="cofactor">
    <cofactor evidence="1">
        <name>heme c</name>
        <dbReference type="ChEBI" id="CHEBI:61717"/>
    </cofactor>
    <text evidence="1">Binds one heme group covalently by a single cysteine link with no axial amino acid ligand. This heme was named heme ci.</text>
</comment>
<comment type="subunit">
    <text evidence="1">The 4 large subunits of the cytochrome b6-f complex are cytochrome b6, subunit IV (17 kDa polypeptide, PetD), cytochrome f and the Rieske protein, while the 4 small subunits are PetG, PetL, PetM and PetN. The complex functions as a dimer.</text>
</comment>
<comment type="subcellular location">
    <subcellularLocation>
        <location evidence="1">Plastid</location>
        <location evidence="1">Chloroplast thylakoid membrane</location>
        <topology evidence="1">Multi-pass membrane protein</topology>
    </subcellularLocation>
</comment>
<comment type="RNA editing">
    <location>
        <position position="204" evidence="2"/>
    </location>
    <text>Editing is independent of splicing and occurs in both leaves and in proplastids.</text>
</comment>
<comment type="miscellaneous">
    <text evidence="1">Heme 1 (or BH or b566) is high-potential and absorbs at about 566 nm, and heme 2 (or BL or b562) is low-potential and absorbs at about 562 nm.</text>
</comment>
<comment type="similarity">
    <text evidence="1">Belongs to the cytochrome b family. PetB subfamily.</text>
</comment>
<sequence length="215" mass="24153">MSKVYDWFEERLEIQAIADDITSKYVPPHVNIFYCLGGITLTCFLVQVATGFAMTFYYRPTVTEAFASVQYIMTEANFGWLIRSVHRWSASMMVLMMILHVFRVYLTGGFKKPRELTWVTGVVLAVLTASFGVTGYSLPWDQVGYWAVKIVTGVPDAIPVIGSPLVELLRGSASVGQSTLTRFYSLHTFVLPLLTAVFMLMHFLMIRKQGISGPL</sequence>